<evidence type="ECO:0000255" key="1">
    <source>
        <dbReference type="HAMAP-Rule" id="MF_01391"/>
    </source>
</evidence>
<evidence type="ECO:0000312" key="2">
    <source>
        <dbReference type="Proteomes" id="UP000006591"/>
    </source>
</evidence>
<protein>
    <recommendedName>
        <fullName evidence="1">Cytochrome c biogenesis protein CcsA</fullName>
    </recommendedName>
</protein>
<name>CCSA_ORYNI</name>
<dbReference type="EMBL" id="AP006728">
    <property type="protein sequence ID" value="BAD26844.1"/>
    <property type="molecule type" value="Genomic_DNA"/>
</dbReference>
<dbReference type="RefSeq" id="YP_052814.1">
    <property type="nucleotide sequence ID" value="NC_005973.1"/>
</dbReference>
<dbReference type="SMR" id="Q6ENA8"/>
<dbReference type="STRING" id="4536.Q6ENA8"/>
<dbReference type="GeneID" id="2885921"/>
<dbReference type="eggNOG" id="ENOG502QU0T">
    <property type="taxonomic scope" value="Eukaryota"/>
</dbReference>
<dbReference type="Proteomes" id="UP000006591">
    <property type="component" value="Chloroplast"/>
</dbReference>
<dbReference type="GO" id="GO:0009535">
    <property type="term" value="C:chloroplast thylakoid membrane"/>
    <property type="evidence" value="ECO:0007669"/>
    <property type="project" value="UniProtKB-SubCell"/>
</dbReference>
<dbReference type="GO" id="GO:0005886">
    <property type="term" value="C:plasma membrane"/>
    <property type="evidence" value="ECO:0007669"/>
    <property type="project" value="TreeGrafter"/>
</dbReference>
<dbReference type="GO" id="GO:0009536">
    <property type="term" value="C:plastid"/>
    <property type="evidence" value="ECO:0000305"/>
    <property type="project" value="Gramene"/>
</dbReference>
<dbReference type="GO" id="GO:0020037">
    <property type="term" value="F:heme binding"/>
    <property type="evidence" value="ECO:0007669"/>
    <property type="project" value="InterPro"/>
</dbReference>
<dbReference type="GO" id="GO:0017004">
    <property type="term" value="P:cytochrome complex assembly"/>
    <property type="evidence" value="ECO:0007669"/>
    <property type="project" value="UniProtKB-UniRule"/>
</dbReference>
<dbReference type="HAMAP" id="MF_01391">
    <property type="entry name" value="CytC_CcsA"/>
    <property type="match status" value="1"/>
</dbReference>
<dbReference type="InterPro" id="IPR002541">
    <property type="entry name" value="Cyt_c_assembly"/>
</dbReference>
<dbReference type="InterPro" id="IPR017562">
    <property type="entry name" value="Cyt_c_biogenesis_CcsA"/>
</dbReference>
<dbReference type="InterPro" id="IPR045062">
    <property type="entry name" value="Cyt_c_biogenesis_CcsA/CcmC"/>
</dbReference>
<dbReference type="NCBIfam" id="TIGR03144">
    <property type="entry name" value="cytochr_II_ccsB"/>
    <property type="match status" value="1"/>
</dbReference>
<dbReference type="PANTHER" id="PTHR30071:SF1">
    <property type="entry name" value="CYTOCHROME B_B6 PROTEIN-RELATED"/>
    <property type="match status" value="1"/>
</dbReference>
<dbReference type="PANTHER" id="PTHR30071">
    <property type="entry name" value="HEME EXPORTER PROTEIN C"/>
    <property type="match status" value="1"/>
</dbReference>
<dbReference type="Pfam" id="PF01578">
    <property type="entry name" value="Cytochrom_C_asm"/>
    <property type="match status" value="1"/>
</dbReference>
<keyword id="KW-0150">Chloroplast</keyword>
<keyword id="KW-0201">Cytochrome c-type biogenesis</keyword>
<keyword id="KW-0472">Membrane</keyword>
<keyword id="KW-0934">Plastid</keyword>
<keyword id="KW-1185">Reference proteome</keyword>
<keyword id="KW-0793">Thylakoid</keyword>
<keyword id="KW-0812">Transmembrane</keyword>
<keyword id="KW-1133">Transmembrane helix</keyword>
<feature type="chain" id="PRO_0000201612" description="Cytochrome c biogenesis protein CcsA">
    <location>
        <begin position="1"/>
        <end position="321"/>
    </location>
</feature>
<feature type="transmembrane region" description="Helical" evidence="1">
    <location>
        <begin position="9"/>
        <end position="29"/>
    </location>
</feature>
<feature type="transmembrane region" description="Helical" evidence="1">
    <location>
        <begin position="44"/>
        <end position="64"/>
    </location>
</feature>
<feature type="transmembrane region" description="Helical" evidence="1">
    <location>
        <begin position="68"/>
        <end position="88"/>
    </location>
</feature>
<feature type="transmembrane region" description="Helical" evidence="1">
    <location>
        <begin position="143"/>
        <end position="163"/>
    </location>
</feature>
<feature type="transmembrane region" description="Helical" evidence="1">
    <location>
        <begin position="226"/>
        <end position="246"/>
    </location>
</feature>
<feature type="transmembrane region" description="Helical" evidence="1">
    <location>
        <begin position="260"/>
        <end position="274"/>
    </location>
</feature>
<feature type="transmembrane region" description="Helical" evidence="1">
    <location>
        <begin position="289"/>
        <end position="309"/>
    </location>
</feature>
<accession>Q6ENA8</accession>
<sequence>MLFATLEHILTHISFSTISIVITIHLITLLVRELGGLRDSSEKGMIATFFCITGFLVSRWASSGHFPLSNLYESLIFLSWALYILHMIPKIQNSKNDLSTITTPSTILTQGFATSGLLTEMHQSTILVPALQSQWLMMHVSMMLLSYATLLCGSLLSAALLMIRFRKNLDFFSKKKKNVLLKTFFFNEIEYFYAKRSALKSTFFPLFPNYYKYQLIERLDSWSYRVISLGFTLLTIGILCGAVWANEAWGSYWNWDPKETWAFITWTIFAIYLHSRTNPNWKGTKSAFVASIGFLIIWICYFGINLLGIGLHSYGSFTLPI</sequence>
<gene>
    <name evidence="1" type="primary">ccsA</name>
</gene>
<comment type="function">
    <text evidence="1">Required during biogenesis of c-type cytochromes (cytochrome c6 and cytochrome f) at the step of heme attachment.</text>
</comment>
<comment type="subunit">
    <text evidence="1">May interact with Ccs1.</text>
</comment>
<comment type="subcellular location">
    <subcellularLocation>
        <location evidence="1">Plastid</location>
        <location evidence="1">Chloroplast thylakoid membrane</location>
        <topology evidence="1">Multi-pass membrane protein</topology>
    </subcellularLocation>
</comment>
<comment type="similarity">
    <text evidence="1">Belongs to the CcmF/CycK/Ccl1/NrfE/CcsA family.</text>
</comment>
<geneLocation type="chloroplast"/>
<organism>
    <name type="scientific">Oryza nivara</name>
    <name type="common">Indian wild rice</name>
    <name type="synonym">Oryza sativa f. spontanea</name>
    <dbReference type="NCBI Taxonomy" id="4536"/>
    <lineage>
        <taxon>Eukaryota</taxon>
        <taxon>Viridiplantae</taxon>
        <taxon>Streptophyta</taxon>
        <taxon>Embryophyta</taxon>
        <taxon>Tracheophyta</taxon>
        <taxon>Spermatophyta</taxon>
        <taxon>Magnoliopsida</taxon>
        <taxon>Liliopsida</taxon>
        <taxon>Poales</taxon>
        <taxon>Poaceae</taxon>
        <taxon>BOP clade</taxon>
        <taxon>Oryzoideae</taxon>
        <taxon>Oryzeae</taxon>
        <taxon>Oryzinae</taxon>
        <taxon>Oryza</taxon>
    </lineage>
</organism>
<reference key="1">
    <citation type="journal article" date="2004" name="Gene">
        <title>The complete nucleotide sequence of wild rice (Oryza nivara) chloroplast genome: first genome wide comparative sequence analysis of wild and cultivated rice.</title>
        <authorList>
            <person name="Masood M.S."/>
            <person name="Nishikawa T."/>
            <person name="Fukuoka S."/>
            <person name="Njenga P.K."/>
            <person name="Tsudzuki T."/>
            <person name="Kadowaki K."/>
        </authorList>
    </citation>
    <scope>NUCLEOTIDE SEQUENCE [LARGE SCALE GENOMIC DNA]</scope>
    <source>
        <strain evidence="2">cv. SL10</strain>
    </source>
</reference>
<proteinExistence type="inferred from homology"/>